<organism>
    <name type="scientific">Rhizobium meliloti (strain 1021)</name>
    <name type="common">Ensifer meliloti</name>
    <name type="synonym">Sinorhizobium meliloti</name>
    <dbReference type="NCBI Taxonomy" id="266834"/>
    <lineage>
        <taxon>Bacteria</taxon>
        <taxon>Pseudomonadati</taxon>
        <taxon>Pseudomonadota</taxon>
        <taxon>Alphaproteobacteria</taxon>
        <taxon>Hyphomicrobiales</taxon>
        <taxon>Rhizobiaceae</taxon>
        <taxon>Sinorhizobium/Ensifer group</taxon>
        <taxon>Sinorhizobium</taxon>
    </lineage>
</organism>
<accession>Q92QU0</accession>
<evidence type="ECO:0000255" key="1">
    <source>
        <dbReference type="HAMAP-Rule" id="MF_00178"/>
    </source>
</evidence>
<gene>
    <name evidence="1" type="primary">ribH1</name>
    <name type="ordered locus">R01215</name>
    <name type="ORF">SMc01777</name>
</gene>
<comment type="function">
    <text evidence="1">Catalyzes the formation of 6,7-dimethyl-8-ribityllumazine by condensation of 5-amino-6-(D-ribitylamino)uracil with 3,4-dihydroxy-2-butanone 4-phosphate. This is the penultimate step in the biosynthesis of riboflavin.</text>
</comment>
<comment type="catalytic activity">
    <reaction evidence="1">
        <text>(2S)-2-hydroxy-3-oxobutyl phosphate + 5-amino-6-(D-ribitylamino)uracil = 6,7-dimethyl-8-(1-D-ribityl)lumazine + phosphate + 2 H2O + H(+)</text>
        <dbReference type="Rhea" id="RHEA:26152"/>
        <dbReference type="ChEBI" id="CHEBI:15377"/>
        <dbReference type="ChEBI" id="CHEBI:15378"/>
        <dbReference type="ChEBI" id="CHEBI:15934"/>
        <dbReference type="ChEBI" id="CHEBI:43474"/>
        <dbReference type="ChEBI" id="CHEBI:58201"/>
        <dbReference type="ChEBI" id="CHEBI:58830"/>
        <dbReference type="EC" id="2.5.1.78"/>
    </reaction>
</comment>
<comment type="pathway">
    <text evidence="1">Cofactor biosynthesis; riboflavin biosynthesis; riboflavin from 2-hydroxy-3-oxobutyl phosphate and 5-amino-6-(D-ribitylamino)uracil: step 1/2.</text>
</comment>
<comment type="similarity">
    <text evidence="1">Belongs to the DMRL synthase family.</text>
</comment>
<feature type="chain" id="PRO_0000134794" description="6,7-dimethyl-8-ribityllumazine synthase 1">
    <location>
        <begin position="1"/>
        <end position="153"/>
    </location>
</feature>
<feature type="active site" description="Proton donor" evidence="1">
    <location>
        <position position="84"/>
    </location>
</feature>
<feature type="binding site" evidence="1">
    <location>
        <position position="16"/>
    </location>
    <ligand>
        <name>5-amino-6-(D-ribitylamino)uracil</name>
        <dbReference type="ChEBI" id="CHEBI:15934"/>
    </ligand>
</feature>
<feature type="binding site" evidence="1">
    <location>
        <begin position="47"/>
        <end position="49"/>
    </location>
    <ligand>
        <name>5-amino-6-(D-ribitylamino)uracil</name>
        <dbReference type="ChEBI" id="CHEBI:15934"/>
    </ligand>
</feature>
<feature type="binding site" evidence="1">
    <location>
        <begin position="76"/>
        <end position="78"/>
    </location>
    <ligand>
        <name>5-amino-6-(D-ribitylamino)uracil</name>
        <dbReference type="ChEBI" id="CHEBI:15934"/>
    </ligand>
</feature>
<feature type="binding site" evidence="1">
    <location>
        <begin position="81"/>
        <end position="82"/>
    </location>
    <ligand>
        <name>(2S)-2-hydroxy-3-oxobutyl phosphate</name>
        <dbReference type="ChEBI" id="CHEBI:58830"/>
    </ligand>
</feature>
<feature type="binding site" evidence="1">
    <location>
        <position position="109"/>
    </location>
    <ligand>
        <name>5-amino-6-(D-ribitylamino)uracil</name>
        <dbReference type="ChEBI" id="CHEBI:15934"/>
    </ligand>
</feature>
<feature type="binding site" evidence="1">
    <location>
        <position position="123"/>
    </location>
    <ligand>
        <name>(2S)-2-hydroxy-3-oxobutyl phosphate</name>
        <dbReference type="ChEBI" id="CHEBI:58830"/>
    </ligand>
</feature>
<protein>
    <recommendedName>
        <fullName evidence="1">6,7-dimethyl-8-ribityllumazine synthase 1</fullName>
        <shortName evidence="1">DMRL synthase 1</shortName>
        <shortName evidence="1">LS 1</shortName>
        <shortName evidence="1">Lumazine synthase 1</shortName>
        <ecNumber evidence="1">2.5.1.78</ecNumber>
    </recommendedName>
</protein>
<reference key="1">
    <citation type="journal article" date="2001" name="Proc. Natl. Acad. Sci. U.S.A.">
        <title>Analysis of the chromosome sequence of the legume symbiont Sinorhizobium meliloti strain 1021.</title>
        <authorList>
            <person name="Capela D."/>
            <person name="Barloy-Hubler F."/>
            <person name="Gouzy J."/>
            <person name="Bothe G."/>
            <person name="Ampe F."/>
            <person name="Batut J."/>
            <person name="Boistard P."/>
            <person name="Becker A."/>
            <person name="Boutry M."/>
            <person name="Cadieu E."/>
            <person name="Dreano S."/>
            <person name="Gloux S."/>
            <person name="Godrie T."/>
            <person name="Goffeau A."/>
            <person name="Kahn D."/>
            <person name="Kiss E."/>
            <person name="Lelaure V."/>
            <person name="Masuy D."/>
            <person name="Pohl T."/>
            <person name="Portetelle D."/>
            <person name="Puehler A."/>
            <person name="Purnelle B."/>
            <person name="Ramsperger U."/>
            <person name="Renard C."/>
            <person name="Thebault P."/>
            <person name="Vandenbol M."/>
            <person name="Weidner S."/>
            <person name="Galibert F."/>
        </authorList>
    </citation>
    <scope>NUCLEOTIDE SEQUENCE [LARGE SCALE GENOMIC DNA]</scope>
    <source>
        <strain>1021</strain>
    </source>
</reference>
<reference key="2">
    <citation type="journal article" date="2001" name="Science">
        <title>The composite genome of the legume symbiont Sinorhizobium meliloti.</title>
        <authorList>
            <person name="Galibert F."/>
            <person name="Finan T.M."/>
            <person name="Long S.R."/>
            <person name="Puehler A."/>
            <person name="Abola P."/>
            <person name="Ampe F."/>
            <person name="Barloy-Hubler F."/>
            <person name="Barnett M.J."/>
            <person name="Becker A."/>
            <person name="Boistard P."/>
            <person name="Bothe G."/>
            <person name="Boutry M."/>
            <person name="Bowser L."/>
            <person name="Buhrmester J."/>
            <person name="Cadieu E."/>
            <person name="Capela D."/>
            <person name="Chain P."/>
            <person name="Cowie A."/>
            <person name="Davis R.W."/>
            <person name="Dreano S."/>
            <person name="Federspiel N.A."/>
            <person name="Fisher R.F."/>
            <person name="Gloux S."/>
            <person name="Godrie T."/>
            <person name="Goffeau A."/>
            <person name="Golding B."/>
            <person name="Gouzy J."/>
            <person name="Gurjal M."/>
            <person name="Hernandez-Lucas I."/>
            <person name="Hong A."/>
            <person name="Huizar L."/>
            <person name="Hyman R.W."/>
            <person name="Jones T."/>
            <person name="Kahn D."/>
            <person name="Kahn M.L."/>
            <person name="Kalman S."/>
            <person name="Keating D.H."/>
            <person name="Kiss E."/>
            <person name="Komp C."/>
            <person name="Lelaure V."/>
            <person name="Masuy D."/>
            <person name="Palm C."/>
            <person name="Peck M.C."/>
            <person name="Pohl T.M."/>
            <person name="Portetelle D."/>
            <person name="Purnelle B."/>
            <person name="Ramsperger U."/>
            <person name="Surzycki R."/>
            <person name="Thebault P."/>
            <person name="Vandenbol M."/>
            <person name="Vorhoelter F.J."/>
            <person name="Weidner S."/>
            <person name="Wells D.H."/>
            <person name="Wong K."/>
            <person name="Yeh K.-C."/>
            <person name="Batut J."/>
        </authorList>
    </citation>
    <scope>NUCLEOTIDE SEQUENCE [LARGE SCALE GENOMIC DNA]</scope>
    <source>
        <strain>1021</strain>
    </source>
</reference>
<sequence length="153" mass="16193">MAKIKPVHILIVEARFYDDMADAMLDGAKHALDAAGATYDIVTVPGALEIPAAIAMALDGADEGGAEYDGFVALGMVIRGETYHFDIVANESARALMDLAVSESLALGNGILTVENDEQAWARARRTEGDKGGFAARAALTMIELKQRLGAEK</sequence>
<dbReference type="EC" id="2.5.1.78" evidence="1"/>
<dbReference type="EMBL" id="AL591688">
    <property type="protein sequence ID" value="CAC45794.1"/>
    <property type="molecule type" value="Genomic_DNA"/>
</dbReference>
<dbReference type="RefSeq" id="NP_385321.1">
    <property type="nucleotide sequence ID" value="NC_003047.1"/>
</dbReference>
<dbReference type="SMR" id="Q92QU0"/>
<dbReference type="EnsemblBacteria" id="CAC45794">
    <property type="protein sequence ID" value="CAC45794"/>
    <property type="gene ID" value="SMc01777"/>
</dbReference>
<dbReference type="KEGG" id="sme:SMc01777"/>
<dbReference type="PATRIC" id="fig|266834.11.peg.2627"/>
<dbReference type="eggNOG" id="COG0054">
    <property type="taxonomic scope" value="Bacteria"/>
</dbReference>
<dbReference type="HOGENOM" id="CLU_089358_1_2_5"/>
<dbReference type="OrthoDB" id="9809709at2"/>
<dbReference type="BRENDA" id="2.5.1.78">
    <property type="organism ID" value="5347"/>
</dbReference>
<dbReference type="UniPathway" id="UPA00275">
    <property type="reaction ID" value="UER00404"/>
</dbReference>
<dbReference type="Proteomes" id="UP000001976">
    <property type="component" value="Chromosome"/>
</dbReference>
<dbReference type="GO" id="GO:0005829">
    <property type="term" value="C:cytosol"/>
    <property type="evidence" value="ECO:0007669"/>
    <property type="project" value="TreeGrafter"/>
</dbReference>
<dbReference type="GO" id="GO:0009349">
    <property type="term" value="C:riboflavin synthase complex"/>
    <property type="evidence" value="ECO:0007669"/>
    <property type="project" value="InterPro"/>
</dbReference>
<dbReference type="GO" id="GO:0000906">
    <property type="term" value="F:6,7-dimethyl-8-ribityllumazine synthase activity"/>
    <property type="evidence" value="ECO:0007669"/>
    <property type="project" value="UniProtKB-UniRule"/>
</dbReference>
<dbReference type="GO" id="GO:0009231">
    <property type="term" value="P:riboflavin biosynthetic process"/>
    <property type="evidence" value="ECO:0007669"/>
    <property type="project" value="UniProtKB-UniRule"/>
</dbReference>
<dbReference type="CDD" id="cd09209">
    <property type="entry name" value="Lumazine_synthase-I"/>
    <property type="match status" value="1"/>
</dbReference>
<dbReference type="Gene3D" id="3.40.50.960">
    <property type="entry name" value="Lumazine/riboflavin synthase"/>
    <property type="match status" value="1"/>
</dbReference>
<dbReference type="HAMAP" id="MF_00178">
    <property type="entry name" value="Lumazine_synth"/>
    <property type="match status" value="1"/>
</dbReference>
<dbReference type="InterPro" id="IPR034964">
    <property type="entry name" value="LS"/>
</dbReference>
<dbReference type="InterPro" id="IPR002180">
    <property type="entry name" value="LS/RS"/>
</dbReference>
<dbReference type="InterPro" id="IPR036467">
    <property type="entry name" value="LS/RS_sf"/>
</dbReference>
<dbReference type="NCBIfam" id="TIGR00114">
    <property type="entry name" value="lumazine-synth"/>
    <property type="match status" value="1"/>
</dbReference>
<dbReference type="PANTHER" id="PTHR21058:SF0">
    <property type="entry name" value="6,7-DIMETHYL-8-RIBITYLLUMAZINE SYNTHASE"/>
    <property type="match status" value="1"/>
</dbReference>
<dbReference type="PANTHER" id="PTHR21058">
    <property type="entry name" value="6,7-DIMETHYL-8-RIBITYLLUMAZINE SYNTHASE DMRL SYNTHASE LUMAZINE SYNTHASE"/>
    <property type="match status" value="1"/>
</dbReference>
<dbReference type="Pfam" id="PF00885">
    <property type="entry name" value="DMRL_synthase"/>
    <property type="match status" value="1"/>
</dbReference>
<dbReference type="SUPFAM" id="SSF52121">
    <property type="entry name" value="Lumazine synthase"/>
    <property type="match status" value="1"/>
</dbReference>
<keyword id="KW-1185">Reference proteome</keyword>
<keyword id="KW-0686">Riboflavin biosynthesis</keyword>
<keyword id="KW-0808">Transferase</keyword>
<proteinExistence type="inferred from homology"/>
<name>RISB1_RHIME</name>